<feature type="chain" id="PRO_0000223445" description="Urease accessory protein UreE">
    <location>
        <begin position="1"/>
        <end position="150"/>
    </location>
</feature>
<evidence type="ECO:0000255" key="1">
    <source>
        <dbReference type="HAMAP-Rule" id="MF_00822"/>
    </source>
</evidence>
<proteinExistence type="inferred from homology"/>
<accession>Q4A0J6</accession>
<name>UREE_STAS1</name>
<reference key="1">
    <citation type="journal article" date="2005" name="Proc. Natl. Acad. Sci. U.S.A.">
        <title>Whole genome sequence of Staphylococcus saprophyticus reveals the pathogenesis of uncomplicated urinary tract infection.</title>
        <authorList>
            <person name="Kuroda M."/>
            <person name="Yamashita A."/>
            <person name="Hirakawa H."/>
            <person name="Kumano M."/>
            <person name="Morikawa K."/>
            <person name="Higashide M."/>
            <person name="Maruyama A."/>
            <person name="Inose Y."/>
            <person name="Matoba K."/>
            <person name="Toh H."/>
            <person name="Kuhara S."/>
            <person name="Hattori M."/>
            <person name="Ohta T."/>
        </authorList>
    </citation>
    <scope>NUCLEOTIDE SEQUENCE [LARGE SCALE GENOMIC DNA]</scope>
    <source>
        <strain>ATCC 15305 / DSM 20229 / NCIMB 8711 / NCTC 7292 / S-41</strain>
    </source>
</reference>
<protein>
    <recommendedName>
        <fullName evidence="1">Urease accessory protein UreE</fullName>
    </recommendedName>
</protein>
<keyword id="KW-0143">Chaperone</keyword>
<keyword id="KW-0963">Cytoplasm</keyword>
<keyword id="KW-0533">Nickel</keyword>
<keyword id="KW-0996">Nickel insertion</keyword>
<keyword id="KW-1185">Reference proteome</keyword>
<gene>
    <name evidence="1" type="primary">ureE</name>
    <name type="ordered locus">SSP0262</name>
</gene>
<comment type="function">
    <text evidence="1">Involved in urease metallocenter assembly. Binds nickel. Probably functions as a nickel donor during metallocenter assembly.</text>
</comment>
<comment type="subcellular location">
    <subcellularLocation>
        <location evidence="1">Cytoplasm</location>
    </subcellularLocation>
</comment>
<comment type="similarity">
    <text evidence="1">Belongs to the UreE family.</text>
</comment>
<sequence>MIIEEIVGNIANFSDSEKGKHMEKVYLENSDLVKRIQRVTTDHGNEIGIRLKQPIDLQYGDILYKDDKNMIVVDVNSEDLLVIKPRTLQEMGDIAHQLGNRHLPAQFTETEMLVQYDYLVESLLKDLGIPYEHEDRKVNKAFRHIGHSHD</sequence>
<organism>
    <name type="scientific">Staphylococcus saprophyticus subsp. saprophyticus (strain ATCC 15305 / DSM 20229 / NCIMB 8711 / NCTC 7292 / S-41)</name>
    <dbReference type="NCBI Taxonomy" id="342451"/>
    <lineage>
        <taxon>Bacteria</taxon>
        <taxon>Bacillati</taxon>
        <taxon>Bacillota</taxon>
        <taxon>Bacilli</taxon>
        <taxon>Bacillales</taxon>
        <taxon>Staphylococcaceae</taxon>
        <taxon>Staphylococcus</taxon>
    </lineage>
</organism>
<dbReference type="EMBL" id="AP008934">
    <property type="protein sequence ID" value="BAE17407.1"/>
    <property type="molecule type" value="Genomic_DNA"/>
</dbReference>
<dbReference type="RefSeq" id="WP_011302249.1">
    <property type="nucleotide sequence ID" value="NZ_MTGA01000037.1"/>
</dbReference>
<dbReference type="SMR" id="Q4A0J6"/>
<dbReference type="GeneID" id="3616068"/>
<dbReference type="KEGG" id="ssp:SSP0262"/>
<dbReference type="PATRIC" id="fig|342451.11.peg.265"/>
<dbReference type="eggNOG" id="COG2371">
    <property type="taxonomic scope" value="Bacteria"/>
</dbReference>
<dbReference type="HOGENOM" id="CLU_093757_3_1_9"/>
<dbReference type="OrthoDB" id="9810882at2"/>
<dbReference type="Proteomes" id="UP000006371">
    <property type="component" value="Chromosome"/>
</dbReference>
<dbReference type="GO" id="GO:0005737">
    <property type="term" value="C:cytoplasm"/>
    <property type="evidence" value="ECO:0007669"/>
    <property type="project" value="UniProtKB-SubCell"/>
</dbReference>
<dbReference type="GO" id="GO:0016151">
    <property type="term" value="F:nickel cation binding"/>
    <property type="evidence" value="ECO:0007669"/>
    <property type="project" value="UniProtKB-UniRule"/>
</dbReference>
<dbReference type="GO" id="GO:0051082">
    <property type="term" value="F:unfolded protein binding"/>
    <property type="evidence" value="ECO:0007669"/>
    <property type="project" value="UniProtKB-UniRule"/>
</dbReference>
<dbReference type="GO" id="GO:0006457">
    <property type="term" value="P:protein folding"/>
    <property type="evidence" value="ECO:0007669"/>
    <property type="project" value="InterPro"/>
</dbReference>
<dbReference type="GO" id="GO:0065003">
    <property type="term" value="P:protein-containing complex assembly"/>
    <property type="evidence" value="ECO:0007669"/>
    <property type="project" value="InterPro"/>
</dbReference>
<dbReference type="GO" id="GO:0019627">
    <property type="term" value="P:urea metabolic process"/>
    <property type="evidence" value="ECO:0007669"/>
    <property type="project" value="InterPro"/>
</dbReference>
<dbReference type="CDD" id="cd00571">
    <property type="entry name" value="UreE"/>
    <property type="match status" value="1"/>
</dbReference>
<dbReference type="Gene3D" id="2.60.260.20">
    <property type="entry name" value="Urease metallochaperone UreE, N-terminal domain"/>
    <property type="match status" value="1"/>
</dbReference>
<dbReference type="Gene3D" id="3.30.70.790">
    <property type="entry name" value="UreE, C-terminal domain"/>
    <property type="match status" value="1"/>
</dbReference>
<dbReference type="HAMAP" id="MF_00822">
    <property type="entry name" value="UreE"/>
    <property type="match status" value="1"/>
</dbReference>
<dbReference type="InterPro" id="IPR012406">
    <property type="entry name" value="UreE"/>
</dbReference>
<dbReference type="InterPro" id="IPR007864">
    <property type="entry name" value="UreE_C_dom"/>
</dbReference>
<dbReference type="InterPro" id="IPR004029">
    <property type="entry name" value="UreE_N"/>
</dbReference>
<dbReference type="InterPro" id="IPR036118">
    <property type="entry name" value="UreE_N_sf"/>
</dbReference>
<dbReference type="NCBIfam" id="NF009755">
    <property type="entry name" value="PRK13261.2-1"/>
    <property type="match status" value="1"/>
</dbReference>
<dbReference type="Pfam" id="PF05194">
    <property type="entry name" value="UreE_C"/>
    <property type="match status" value="1"/>
</dbReference>
<dbReference type="Pfam" id="PF02814">
    <property type="entry name" value="UreE_N"/>
    <property type="match status" value="1"/>
</dbReference>
<dbReference type="PIRSF" id="PIRSF036402">
    <property type="entry name" value="Ureas_acces_UreE"/>
    <property type="match status" value="1"/>
</dbReference>
<dbReference type="SMART" id="SM00988">
    <property type="entry name" value="UreE_N"/>
    <property type="match status" value="1"/>
</dbReference>
<dbReference type="SUPFAM" id="SSF69737">
    <property type="entry name" value="Urease metallochaperone UreE, C-terminal domain"/>
    <property type="match status" value="1"/>
</dbReference>
<dbReference type="SUPFAM" id="SSF69287">
    <property type="entry name" value="Urease metallochaperone UreE, N-terminal domain"/>
    <property type="match status" value="1"/>
</dbReference>